<dbReference type="EMBL" id="FM180568">
    <property type="protein sequence ID" value="CAS11781.1"/>
    <property type="molecule type" value="Genomic_DNA"/>
</dbReference>
<dbReference type="RefSeq" id="WP_000872908.1">
    <property type="nucleotide sequence ID" value="NC_011601.1"/>
</dbReference>
<dbReference type="SMR" id="B7UNP9"/>
<dbReference type="GeneID" id="93777969"/>
<dbReference type="KEGG" id="ecg:E2348C_4233"/>
<dbReference type="HOGENOM" id="CLU_072626_4_0_6"/>
<dbReference type="Proteomes" id="UP000008205">
    <property type="component" value="Chromosome"/>
</dbReference>
<dbReference type="GO" id="GO:0005829">
    <property type="term" value="C:cytosol"/>
    <property type="evidence" value="ECO:0007669"/>
    <property type="project" value="TreeGrafter"/>
</dbReference>
<dbReference type="GO" id="GO:0060698">
    <property type="term" value="F:endoribonuclease inhibitor activity"/>
    <property type="evidence" value="ECO:0007669"/>
    <property type="project" value="UniProtKB-UniRule"/>
</dbReference>
<dbReference type="GO" id="GO:0019899">
    <property type="term" value="F:enzyme binding"/>
    <property type="evidence" value="ECO:0007669"/>
    <property type="project" value="UniProtKB-UniRule"/>
</dbReference>
<dbReference type="GO" id="GO:1902369">
    <property type="term" value="P:negative regulation of RNA catabolic process"/>
    <property type="evidence" value="ECO:0007669"/>
    <property type="project" value="TreeGrafter"/>
</dbReference>
<dbReference type="CDD" id="cd16841">
    <property type="entry name" value="RraA_family"/>
    <property type="match status" value="1"/>
</dbReference>
<dbReference type="FunFam" id="3.50.30.40:FF:000001">
    <property type="entry name" value="Regulator of ribonuclease activity A"/>
    <property type="match status" value="1"/>
</dbReference>
<dbReference type="Gene3D" id="3.50.30.40">
    <property type="entry name" value="Ribonuclease E inhibitor RraA/RraA-like"/>
    <property type="match status" value="1"/>
</dbReference>
<dbReference type="HAMAP" id="MF_00471">
    <property type="entry name" value="RraA"/>
    <property type="match status" value="1"/>
</dbReference>
<dbReference type="InterPro" id="IPR010203">
    <property type="entry name" value="RraA"/>
</dbReference>
<dbReference type="InterPro" id="IPR005493">
    <property type="entry name" value="RraA/RraA-like"/>
</dbReference>
<dbReference type="InterPro" id="IPR036704">
    <property type="entry name" value="RraA/RraA-like_sf"/>
</dbReference>
<dbReference type="InterPro" id="IPR014339">
    <property type="entry name" value="RraA_gpbac"/>
</dbReference>
<dbReference type="NCBIfam" id="TIGR01935">
    <property type="entry name" value="NOT-MenG"/>
    <property type="match status" value="1"/>
</dbReference>
<dbReference type="NCBIfam" id="NF006875">
    <property type="entry name" value="PRK09372.1"/>
    <property type="match status" value="1"/>
</dbReference>
<dbReference type="NCBIfam" id="TIGR02998">
    <property type="entry name" value="RraA_entero"/>
    <property type="match status" value="1"/>
</dbReference>
<dbReference type="PANTHER" id="PTHR33254">
    <property type="entry name" value="4-HYDROXY-4-METHYL-2-OXOGLUTARATE ALDOLASE 3-RELATED"/>
    <property type="match status" value="1"/>
</dbReference>
<dbReference type="PANTHER" id="PTHR33254:SF29">
    <property type="entry name" value="REGULATOR OF RIBONUCLEASE ACTIVITY A"/>
    <property type="match status" value="1"/>
</dbReference>
<dbReference type="Pfam" id="PF03737">
    <property type="entry name" value="RraA-like"/>
    <property type="match status" value="1"/>
</dbReference>
<dbReference type="SUPFAM" id="SSF89562">
    <property type="entry name" value="RraA-like"/>
    <property type="match status" value="1"/>
</dbReference>
<evidence type="ECO:0000255" key="1">
    <source>
        <dbReference type="HAMAP-Rule" id="MF_00471"/>
    </source>
</evidence>
<comment type="function">
    <text evidence="1">Globally modulates RNA abundance by binding to RNase E (Rne) and regulating its endonucleolytic activity. Can modulate Rne action in a substrate-dependent manner by altering the composition of the degradosome. Modulates RNA-binding and helicase activities of the degradosome.</text>
</comment>
<comment type="subunit">
    <text evidence="1">Homotrimer. Binds to both RNA-binding sites in the C-terminal region of Rne and to RhlB.</text>
</comment>
<comment type="subcellular location">
    <subcellularLocation>
        <location evidence="1">Cytoplasm</location>
    </subcellularLocation>
</comment>
<comment type="similarity">
    <text evidence="1">Belongs to the RraA family.</text>
</comment>
<organism>
    <name type="scientific">Escherichia coli O127:H6 (strain E2348/69 / EPEC)</name>
    <dbReference type="NCBI Taxonomy" id="574521"/>
    <lineage>
        <taxon>Bacteria</taxon>
        <taxon>Pseudomonadati</taxon>
        <taxon>Pseudomonadota</taxon>
        <taxon>Gammaproteobacteria</taxon>
        <taxon>Enterobacterales</taxon>
        <taxon>Enterobacteriaceae</taxon>
        <taxon>Escherichia</taxon>
    </lineage>
</organism>
<feature type="chain" id="PRO_1000135490" description="Regulator of ribonuclease activity A">
    <location>
        <begin position="1"/>
        <end position="161"/>
    </location>
</feature>
<proteinExistence type="inferred from homology"/>
<keyword id="KW-0963">Cytoplasm</keyword>
<keyword id="KW-1185">Reference proteome</keyword>
<sequence length="161" mass="17360">MKYDTSELCDIYQEDVNVVEPLFSNFGGRASFGGQIITVKCFEDNGLLYDLLEQNGRGRVLVVDGGGSVRRALVDAELARLAVQNEWEGLVIYGAVRQVDDLEELDIGIQAMAAIPVGAAGEGIGESDVRVNFGGVTFFSGDHLYADNTGIILSEDPLDIE</sequence>
<reference key="1">
    <citation type="journal article" date="2009" name="J. Bacteriol.">
        <title>Complete genome sequence and comparative genome analysis of enteropathogenic Escherichia coli O127:H6 strain E2348/69.</title>
        <authorList>
            <person name="Iguchi A."/>
            <person name="Thomson N.R."/>
            <person name="Ogura Y."/>
            <person name="Saunders D."/>
            <person name="Ooka T."/>
            <person name="Henderson I.R."/>
            <person name="Harris D."/>
            <person name="Asadulghani M."/>
            <person name="Kurokawa K."/>
            <person name="Dean P."/>
            <person name="Kenny B."/>
            <person name="Quail M.A."/>
            <person name="Thurston S."/>
            <person name="Dougan G."/>
            <person name="Hayashi T."/>
            <person name="Parkhill J."/>
            <person name="Frankel G."/>
        </authorList>
    </citation>
    <scope>NUCLEOTIDE SEQUENCE [LARGE SCALE GENOMIC DNA]</scope>
    <source>
        <strain>E2348/69 / EPEC</strain>
    </source>
</reference>
<gene>
    <name evidence="1" type="primary">rraA</name>
    <name type="ordered locus">E2348C_4233</name>
</gene>
<protein>
    <recommendedName>
        <fullName evidence="1">Regulator of ribonuclease activity A</fullName>
    </recommendedName>
</protein>
<accession>B7UNP9</accession>
<name>RRAA_ECO27</name>